<reference key="1">
    <citation type="journal article" date="2008" name="J. Bacteriol.">
        <title>The pangenome structure of Escherichia coli: comparative genomic analysis of E. coli commensal and pathogenic isolates.</title>
        <authorList>
            <person name="Rasko D.A."/>
            <person name="Rosovitz M.J."/>
            <person name="Myers G.S.A."/>
            <person name="Mongodin E.F."/>
            <person name="Fricke W.F."/>
            <person name="Gajer P."/>
            <person name="Crabtree J."/>
            <person name="Sebaihia M."/>
            <person name="Thomson N.R."/>
            <person name="Chaudhuri R."/>
            <person name="Henderson I.R."/>
            <person name="Sperandio V."/>
            <person name="Ravel J."/>
        </authorList>
    </citation>
    <scope>NUCLEOTIDE SEQUENCE [LARGE SCALE GENOMIC DNA]</scope>
    <source>
        <strain>E24377A / ETEC</strain>
    </source>
</reference>
<name>METE_ECO24</name>
<comment type="function">
    <text evidence="1">Catalyzes the transfer of a methyl group from 5-methyltetrahydrofolate to homocysteine resulting in methionine formation.</text>
</comment>
<comment type="catalytic activity">
    <reaction evidence="1">
        <text>5-methyltetrahydropteroyltri-L-glutamate + L-homocysteine = tetrahydropteroyltri-L-glutamate + L-methionine</text>
        <dbReference type="Rhea" id="RHEA:21196"/>
        <dbReference type="ChEBI" id="CHEBI:57844"/>
        <dbReference type="ChEBI" id="CHEBI:58140"/>
        <dbReference type="ChEBI" id="CHEBI:58199"/>
        <dbReference type="ChEBI" id="CHEBI:58207"/>
        <dbReference type="EC" id="2.1.1.14"/>
    </reaction>
</comment>
<comment type="cofactor">
    <cofactor evidence="1">
        <name>Zn(2+)</name>
        <dbReference type="ChEBI" id="CHEBI:29105"/>
    </cofactor>
    <text evidence="1">Binds 1 zinc ion per subunit.</text>
</comment>
<comment type="pathway">
    <text evidence="1">Amino-acid biosynthesis; L-methionine biosynthesis via de novo pathway; L-methionine from L-homocysteine (MetE route): step 1/1.</text>
</comment>
<comment type="similarity">
    <text evidence="1">Belongs to the vitamin-B12 independent methionine synthase family.</text>
</comment>
<organism>
    <name type="scientific">Escherichia coli O139:H28 (strain E24377A / ETEC)</name>
    <dbReference type="NCBI Taxonomy" id="331111"/>
    <lineage>
        <taxon>Bacteria</taxon>
        <taxon>Pseudomonadati</taxon>
        <taxon>Pseudomonadota</taxon>
        <taxon>Gammaproteobacteria</taxon>
        <taxon>Enterobacterales</taxon>
        <taxon>Enterobacteriaceae</taxon>
        <taxon>Escherichia</taxon>
    </lineage>
</organism>
<protein>
    <recommendedName>
        <fullName evidence="1">5-methyltetrahydropteroyltriglutamate--homocysteine methyltransferase</fullName>
        <ecNumber evidence="1">2.1.1.14</ecNumber>
    </recommendedName>
    <alternativeName>
        <fullName evidence="1">Cobalamin-independent methionine synthase</fullName>
    </alternativeName>
    <alternativeName>
        <fullName evidence="1">Methionine synthase, vitamin-B12 independent isozyme</fullName>
    </alternativeName>
</protein>
<dbReference type="EC" id="2.1.1.14" evidence="1"/>
<dbReference type="EMBL" id="CP000800">
    <property type="protein sequence ID" value="ABV19772.1"/>
    <property type="molecule type" value="Genomic_DNA"/>
</dbReference>
<dbReference type="RefSeq" id="WP_000153970.1">
    <property type="nucleotide sequence ID" value="NC_009801.1"/>
</dbReference>
<dbReference type="SMR" id="A7ZU36"/>
<dbReference type="GeneID" id="75204823"/>
<dbReference type="KEGG" id="ecw:EcE24377A_4350"/>
<dbReference type="HOGENOM" id="CLU_013175_0_0_6"/>
<dbReference type="UniPathway" id="UPA00051">
    <property type="reaction ID" value="UER00082"/>
</dbReference>
<dbReference type="Proteomes" id="UP000001122">
    <property type="component" value="Chromosome"/>
</dbReference>
<dbReference type="GO" id="GO:0003871">
    <property type="term" value="F:5-methyltetrahydropteroyltriglutamate-homocysteine S-methyltransferase activity"/>
    <property type="evidence" value="ECO:0007669"/>
    <property type="project" value="UniProtKB-UniRule"/>
</dbReference>
<dbReference type="GO" id="GO:0008270">
    <property type="term" value="F:zinc ion binding"/>
    <property type="evidence" value="ECO:0007669"/>
    <property type="project" value="InterPro"/>
</dbReference>
<dbReference type="GO" id="GO:0009086">
    <property type="term" value="P:methionine biosynthetic process"/>
    <property type="evidence" value="ECO:0007669"/>
    <property type="project" value="UniProtKB-UniRule"/>
</dbReference>
<dbReference type="GO" id="GO:0032259">
    <property type="term" value="P:methylation"/>
    <property type="evidence" value="ECO:0007669"/>
    <property type="project" value="UniProtKB-KW"/>
</dbReference>
<dbReference type="CDD" id="cd03311">
    <property type="entry name" value="CIMS_C_terminal_like"/>
    <property type="match status" value="1"/>
</dbReference>
<dbReference type="CDD" id="cd03312">
    <property type="entry name" value="CIMS_N_terminal_like"/>
    <property type="match status" value="1"/>
</dbReference>
<dbReference type="FunFam" id="3.20.20.210:FF:000002">
    <property type="entry name" value="5-methyltetrahydropteroyltriglutamate--homocysteine methyltransferase"/>
    <property type="match status" value="1"/>
</dbReference>
<dbReference type="FunFam" id="3.20.20.210:FF:000003">
    <property type="entry name" value="5-methyltetrahydropteroyltriglutamate--homocysteine methyltransferase"/>
    <property type="match status" value="1"/>
</dbReference>
<dbReference type="Gene3D" id="3.20.20.210">
    <property type="match status" value="2"/>
</dbReference>
<dbReference type="HAMAP" id="MF_00172">
    <property type="entry name" value="Meth_synth"/>
    <property type="match status" value="1"/>
</dbReference>
<dbReference type="InterPro" id="IPR013215">
    <property type="entry name" value="Cbl-indep_Met_Synth_N"/>
</dbReference>
<dbReference type="InterPro" id="IPR006276">
    <property type="entry name" value="Cobalamin-indep_Met_synthase"/>
</dbReference>
<dbReference type="InterPro" id="IPR002629">
    <property type="entry name" value="Met_Synth_C/arc"/>
</dbReference>
<dbReference type="InterPro" id="IPR038071">
    <property type="entry name" value="UROD/MetE-like_sf"/>
</dbReference>
<dbReference type="NCBIfam" id="TIGR01371">
    <property type="entry name" value="met_syn_B12ind"/>
    <property type="match status" value="1"/>
</dbReference>
<dbReference type="NCBIfam" id="NF003556">
    <property type="entry name" value="PRK05222.1"/>
    <property type="match status" value="1"/>
</dbReference>
<dbReference type="PANTHER" id="PTHR30519">
    <property type="entry name" value="5-METHYLTETRAHYDROPTEROYLTRIGLUTAMATE--HOMOCYSTEINE METHYLTRANSFERASE"/>
    <property type="match status" value="1"/>
</dbReference>
<dbReference type="Pfam" id="PF08267">
    <property type="entry name" value="Meth_synt_1"/>
    <property type="match status" value="1"/>
</dbReference>
<dbReference type="Pfam" id="PF01717">
    <property type="entry name" value="Meth_synt_2"/>
    <property type="match status" value="1"/>
</dbReference>
<dbReference type="PIRSF" id="PIRSF000382">
    <property type="entry name" value="MeTrfase_B12_ind"/>
    <property type="match status" value="1"/>
</dbReference>
<dbReference type="SUPFAM" id="SSF51726">
    <property type="entry name" value="UROD/MetE-like"/>
    <property type="match status" value="2"/>
</dbReference>
<evidence type="ECO:0000255" key="1">
    <source>
        <dbReference type="HAMAP-Rule" id="MF_00172"/>
    </source>
</evidence>
<proteinExistence type="inferred from homology"/>
<gene>
    <name evidence="1" type="primary">metE</name>
    <name type="ordered locus">EcE24377A_4350</name>
</gene>
<keyword id="KW-0028">Amino-acid biosynthesis</keyword>
<keyword id="KW-0479">Metal-binding</keyword>
<keyword id="KW-0486">Methionine biosynthesis</keyword>
<keyword id="KW-0489">Methyltransferase</keyword>
<keyword id="KW-1185">Reference proteome</keyword>
<keyword id="KW-0677">Repeat</keyword>
<keyword id="KW-0808">Transferase</keyword>
<keyword id="KW-0862">Zinc</keyword>
<feature type="chain" id="PRO_1000058313" description="5-methyltetrahydropteroyltriglutamate--homocysteine methyltransferase">
    <location>
        <begin position="1"/>
        <end position="753"/>
    </location>
</feature>
<feature type="active site" description="Proton donor" evidence="1">
    <location>
        <position position="694"/>
    </location>
</feature>
<feature type="binding site" evidence="1">
    <location>
        <begin position="17"/>
        <end position="20"/>
    </location>
    <ligand>
        <name>5-methyltetrahydropteroyltri-L-glutamate</name>
        <dbReference type="ChEBI" id="CHEBI:58207"/>
    </ligand>
</feature>
<feature type="binding site" evidence="1">
    <location>
        <position position="117"/>
    </location>
    <ligand>
        <name>5-methyltetrahydropteroyltri-L-glutamate</name>
        <dbReference type="ChEBI" id="CHEBI:58207"/>
    </ligand>
</feature>
<feature type="binding site" evidence="1">
    <location>
        <begin position="431"/>
        <end position="433"/>
    </location>
    <ligand>
        <name>L-homocysteine</name>
        <dbReference type="ChEBI" id="CHEBI:58199"/>
    </ligand>
</feature>
<feature type="binding site" evidence="1">
    <location>
        <begin position="431"/>
        <end position="433"/>
    </location>
    <ligand>
        <name>L-methionine</name>
        <dbReference type="ChEBI" id="CHEBI:57844"/>
    </ligand>
</feature>
<feature type="binding site" evidence="1">
    <location>
        <position position="484"/>
    </location>
    <ligand>
        <name>L-homocysteine</name>
        <dbReference type="ChEBI" id="CHEBI:58199"/>
    </ligand>
</feature>
<feature type="binding site" evidence="1">
    <location>
        <position position="484"/>
    </location>
    <ligand>
        <name>L-methionine</name>
        <dbReference type="ChEBI" id="CHEBI:57844"/>
    </ligand>
</feature>
<feature type="binding site" evidence="1">
    <location>
        <begin position="515"/>
        <end position="516"/>
    </location>
    <ligand>
        <name>5-methyltetrahydropteroyltri-L-glutamate</name>
        <dbReference type="ChEBI" id="CHEBI:58207"/>
    </ligand>
</feature>
<feature type="binding site" evidence="1">
    <location>
        <position position="561"/>
    </location>
    <ligand>
        <name>5-methyltetrahydropteroyltri-L-glutamate</name>
        <dbReference type="ChEBI" id="CHEBI:58207"/>
    </ligand>
</feature>
<feature type="binding site" evidence="1">
    <location>
        <position position="599"/>
    </location>
    <ligand>
        <name>L-homocysteine</name>
        <dbReference type="ChEBI" id="CHEBI:58199"/>
    </ligand>
</feature>
<feature type="binding site" evidence="1">
    <location>
        <position position="599"/>
    </location>
    <ligand>
        <name>L-methionine</name>
        <dbReference type="ChEBI" id="CHEBI:57844"/>
    </ligand>
</feature>
<feature type="binding site" evidence="1">
    <location>
        <position position="605"/>
    </location>
    <ligand>
        <name>5-methyltetrahydropteroyltri-L-glutamate</name>
        <dbReference type="ChEBI" id="CHEBI:58207"/>
    </ligand>
</feature>
<feature type="binding site" evidence="1">
    <location>
        <position position="641"/>
    </location>
    <ligand>
        <name>Zn(2+)</name>
        <dbReference type="ChEBI" id="CHEBI:29105"/>
        <note>catalytic</note>
    </ligand>
</feature>
<feature type="binding site" evidence="1">
    <location>
        <position position="643"/>
    </location>
    <ligand>
        <name>Zn(2+)</name>
        <dbReference type="ChEBI" id="CHEBI:29105"/>
        <note>catalytic</note>
    </ligand>
</feature>
<feature type="binding site" evidence="1">
    <location>
        <position position="665"/>
    </location>
    <ligand>
        <name>Zn(2+)</name>
        <dbReference type="ChEBI" id="CHEBI:29105"/>
        <note>catalytic</note>
    </ligand>
</feature>
<feature type="binding site" evidence="1">
    <location>
        <position position="726"/>
    </location>
    <ligand>
        <name>Zn(2+)</name>
        <dbReference type="ChEBI" id="CHEBI:29105"/>
        <note>catalytic</note>
    </ligand>
</feature>
<accession>A7ZU36</accession>
<sequence>MTILNHTLGFPRVGLRRELKKAQESYWAGNSTREELLTVGRELRARHWDQQKQAGIDLLPVGDFAWYDHVLTTSLLLGNVPPRHQNKDGSVDIDTLFRIGRGRAPTGEPAAAAEMTKWFNTNYHYMVPEFVKGQQFKLTWTQLLEEVDEALALGHNVKPVLLGPVTYLWLGKVKGEQFDRLSLLNDILPVYQQVLAELAKRGIEWVQIDEPALVLELPQAWLDAYKPAYDALQGQVKLLLTTYFEGVTPNLDTITALPVQGLHVDLVHGKDDVAELHKRLPSDWLLSAGLINGRNVWRADLTEKYAQIKDIVGKRDLWVASSCSLLHSPIDLSVETRLDAEVKSWFAFALQKCHELALLRDALNSGDTAALAEWSAPIQARRHSTRVHNPAVEKRLAAITAQDSQRANVYEVRAEAQRARFKLPAWPTTTIGSFPQTTEIRTLRLDFKKGNLDANNYRTGIAEHIRQAIVEQERLGLDVLVHGEAERNDMVEYFGEHLDGFVFTQNGWVQSYGSRCVKPPIVIGDISRPAPITVEWAKYAQSLTDKPVKGMLTGPVTILCWSFPREDVSRETIAKQIALALRDEVADLEAAGIGIIQIDEPALREGLPLRRSDWDAYLQWGVEAFRINAAVAKDDTQIHTHMCYCEFNDIMDSIAALDADVITIETSRSDMELLESFEEFDYPNEIGPGVYDIHSPNVPSVEWIEALLKKAAKRIPAERLWVNPDCGLKTRGWPETRAALANMVQAAQNLRRG</sequence>